<evidence type="ECO:0000255" key="1">
    <source>
        <dbReference type="HAMAP-Rule" id="MF_03157"/>
    </source>
</evidence>
<keyword id="KW-0067">ATP-binding</keyword>
<keyword id="KW-0963">Cytoplasm</keyword>
<keyword id="KW-0456">Lyase</keyword>
<keyword id="KW-0520">NAD</keyword>
<keyword id="KW-0521">NADP</keyword>
<keyword id="KW-0547">Nucleotide-binding</keyword>
<keyword id="KW-0597">Phosphoprotein</keyword>
<keyword id="KW-1185">Reference proteome</keyword>
<name>NNRD_CANAL</name>
<proteinExistence type="inferred from homology"/>
<accession>Q59M69</accession>
<accession>A0A1D8PPS4</accession>
<dbReference type="EC" id="4.2.1.93" evidence="1"/>
<dbReference type="EMBL" id="CP017628">
    <property type="protein sequence ID" value="AOW30139.1"/>
    <property type="molecule type" value="Genomic_DNA"/>
</dbReference>
<dbReference type="RefSeq" id="XP_710846.2">
    <property type="nucleotide sequence ID" value="XM_705754.2"/>
</dbReference>
<dbReference type="SMR" id="Q59M69"/>
<dbReference type="FunCoup" id="Q59M69">
    <property type="interactions" value="177"/>
</dbReference>
<dbReference type="STRING" id="237561.Q59M69"/>
<dbReference type="EnsemblFungi" id="C6_02030C_A-T">
    <property type="protein sequence ID" value="C6_02030C_A-T-p1"/>
    <property type="gene ID" value="C6_02030C_A"/>
</dbReference>
<dbReference type="GeneID" id="3647562"/>
<dbReference type="KEGG" id="cal:CAALFM_C602030CA"/>
<dbReference type="CGD" id="CAL0000185966">
    <property type="gene designation" value="orf19.11002"/>
</dbReference>
<dbReference type="VEuPathDB" id="FungiDB:C6_02030C_A"/>
<dbReference type="eggNOG" id="KOG3974">
    <property type="taxonomic scope" value="Eukaryota"/>
</dbReference>
<dbReference type="HOGENOM" id="CLU_030651_0_0_1"/>
<dbReference type="InParanoid" id="Q59M69"/>
<dbReference type="OrthoDB" id="8110916at2759"/>
<dbReference type="PRO" id="PR:Q59M69"/>
<dbReference type="Proteomes" id="UP000000559">
    <property type="component" value="Chromosome 6"/>
</dbReference>
<dbReference type="GO" id="GO:0005737">
    <property type="term" value="C:cytoplasm"/>
    <property type="evidence" value="ECO:0007669"/>
    <property type="project" value="UniProtKB-SubCell"/>
</dbReference>
<dbReference type="GO" id="GO:0005524">
    <property type="term" value="F:ATP binding"/>
    <property type="evidence" value="ECO:0007669"/>
    <property type="project" value="UniProtKB-KW"/>
</dbReference>
<dbReference type="GO" id="GO:0047453">
    <property type="term" value="F:ATP-dependent NAD(P)H-hydrate dehydratase activity"/>
    <property type="evidence" value="ECO:0000318"/>
    <property type="project" value="GO_Central"/>
</dbReference>
<dbReference type="GO" id="GO:0110051">
    <property type="term" value="P:metabolite repair"/>
    <property type="evidence" value="ECO:0000318"/>
    <property type="project" value="GO_Central"/>
</dbReference>
<dbReference type="GO" id="GO:0046496">
    <property type="term" value="P:nicotinamide nucleotide metabolic process"/>
    <property type="evidence" value="ECO:0007669"/>
    <property type="project" value="UniProtKB-UniRule"/>
</dbReference>
<dbReference type="CDD" id="cd01171">
    <property type="entry name" value="YXKO-related"/>
    <property type="match status" value="1"/>
</dbReference>
<dbReference type="Gene3D" id="3.40.1190.20">
    <property type="match status" value="1"/>
</dbReference>
<dbReference type="HAMAP" id="MF_01965">
    <property type="entry name" value="NADHX_dehydratase"/>
    <property type="match status" value="1"/>
</dbReference>
<dbReference type="InterPro" id="IPR017953">
    <property type="entry name" value="Carbohydrate_kinase_pred_CS"/>
</dbReference>
<dbReference type="InterPro" id="IPR000631">
    <property type="entry name" value="CARKD"/>
</dbReference>
<dbReference type="InterPro" id="IPR029056">
    <property type="entry name" value="Ribokinase-like"/>
</dbReference>
<dbReference type="NCBIfam" id="TIGR00196">
    <property type="entry name" value="yjeF_cterm"/>
    <property type="match status" value="1"/>
</dbReference>
<dbReference type="PANTHER" id="PTHR12592:SF0">
    <property type="entry name" value="ATP-DEPENDENT (S)-NAD(P)H-HYDRATE DEHYDRATASE"/>
    <property type="match status" value="1"/>
</dbReference>
<dbReference type="PANTHER" id="PTHR12592">
    <property type="entry name" value="ATP-DEPENDENT (S)-NAD(P)H-HYDRATE DEHYDRATASE FAMILY MEMBER"/>
    <property type="match status" value="1"/>
</dbReference>
<dbReference type="Pfam" id="PF01256">
    <property type="entry name" value="Carb_kinase"/>
    <property type="match status" value="1"/>
</dbReference>
<dbReference type="SUPFAM" id="SSF53613">
    <property type="entry name" value="Ribokinase-like"/>
    <property type="match status" value="1"/>
</dbReference>
<dbReference type="PROSITE" id="PS01050">
    <property type="entry name" value="YJEF_C_2"/>
    <property type="match status" value="1"/>
</dbReference>
<dbReference type="PROSITE" id="PS51383">
    <property type="entry name" value="YJEF_C_3"/>
    <property type="match status" value="1"/>
</dbReference>
<organism>
    <name type="scientific">Candida albicans (strain SC5314 / ATCC MYA-2876)</name>
    <name type="common">Yeast</name>
    <dbReference type="NCBI Taxonomy" id="237561"/>
    <lineage>
        <taxon>Eukaryota</taxon>
        <taxon>Fungi</taxon>
        <taxon>Dikarya</taxon>
        <taxon>Ascomycota</taxon>
        <taxon>Saccharomycotina</taxon>
        <taxon>Pichiomycetes</taxon>
        <taxon>Debaryomycetaceae</taxon>
        <taxon>Candida/Lodderomyces clade</taxon>
        <taxon>Candida</taxon>
    </lineage>
</organism>
<gene>
    <name type="ordered locus">CAALFM_C602030CA</name>
    <name type="ORF">CaO19.11002</name>
    <name type="ORF">CaO19.3508</name>
</gene>
<protein>
    <recommendedName>
        <fullName evidence="1">ATP-dependent (S)-NAD(P)H-hydrate dehydratase</fullName>
        <ecNumber evidence="1">4.2.1.93</ecNumber>
    </recommendedName>
    <alternativeName>
        <fullName evidence="1">ATP-dependent NAD(P)HX dehydratase</fullName>
    </alternativeName>
</protein>
<reference key="1">
    <citation type="journal article" date="2004" name="Proc. Natl. Acad. Sci. U.S.A.">
        <title>The diploid genome sequence of Candida albicans.</title>
        <authorList>
            <person name="Jones T."/>
            <person name="Federspiel N.A."/>
            <person name="Chibana H."/>
            <person name="Dungan J."/>
            <person name="Kalman S."/>
            <person name="Magee B.B."/>
            <person name="Newport G."/>
            <person name="Thorstenson Y.R."/>
            <person name="Agabian N."/>
            <person name="Magee P.T."/>
            <person name="Davis R.W."/>
            <person name="Scherer S."/>
        </authorList>
    </citation>
    <scope>NUCLEOTIDE SEQUENCE [LARGE SCALE GENOMIC DNA]</scope>
    <source>
        <strain>SC5314 / ATCC MYA-2876</strain>
    </source>
</reference>
<reference key="2">
    <citation type="journal article" date="2007" name="Genome Biol.">
        <title>Assembly of the Candida albicans genome into sixteen supercontigs aligned on the eight chromosomes.</title>
        <authorList>
            <person name="van het Hoog M."/>
            <person name="Rast T.J."/>
            <person name="Martchenko M."/>
            <person name="Grindle S."/>
            <person name="Dignard D."/>
            <person name="Hogues H."/>
            <person name="Cuomo C."/>
            <person name="Berriman M."/>
            <person name="Scherer S."/>
            <person name="Magee B.B."/>
            <person name="Whiteway M."/>
            <person name="Chibana H."/>
            <person name="Nantel A."/>
            <person name="Magee P.T."/>
        </authorList>
    </citation>
    <scope>GENOME REANNOTATION</scope>
    <source>
        <strain>SC5314 / ATCC MYA-2876</strain>
    </source>
</reference>
<reference key="3">
    <citation type="journal article" date="2013" name="Genome Biol.">
        <title>Assembly of a phased diploid Candida albicans genome facilitates allele-specific measurements and provides a simple model for repeat and indel structure.</title>
        <authorList>
            <person name="Muzzey D."/>
            <person name="Schwartz K."/>
            <person name="Weissman J.S."/>
            <person name="Sherlock G."/>
        </authorList>
    </citation>
    <scope>NUCLEOTIDE SEQUENCE [LARGE SCALE GENOMIC DNA]</scope>
    <scope>GENOME REANNOTATION</scope>
    <source>
        <strain>SC5314 / ATCC MYA-2876</strain>
    </source>
</reference>
<comment type="function">
    <text evidence="1">Catalyzes the dehydration of the S-form of NAD(P)HX at the expense of ATP, which is converted to ADP. Together with NAD(P)HX epimerase, which catalyzes the epimerization of the S- and R-forms, the enzyme allows the repair of both epimers of NAD(P)HX, a damaged form of NAD(P)H that is a result of enzymatic or heat-dependent hydration.</text>
</comment>
<comment type="catalytic activity">
    <reaction evidence="1">
        <text>(6S)-NADHX + ATP = ADP + phosphate + NADH + H(+)</text>
        <dbReference type="Rhea" id="RHEA:19017"/>
        <dbReference type="ChEBI" id="CHEBI:15378"/>
        <dbReference type="ChEBI" id="CHEBI:30616"/>
        <dbReference type="ChEBI" id="CHEBI:43474"/>
        <dbReference type="ChEBI" id="CHEBI:57945"/>
        <dbReference type="ChEBI" id="CHEBI:64074"/>
        <dbReference type="ChEBI" id="CHEBI:456216"/>
        <dbReference type="EC" id="4.2.1.93"/>
    </reaction>
</comment>
<comment type="catalytic activity">
    <reaction>
        <text>(6S)-NADPHX + ATP = ADP + phosphate + NADPH + H(+)</text>
        <dbReference type="Rhea" id="RHEA:32231"/>
        <dbReference type="ChEBI" id="CHEBI:15378"/>
        <dbReference type="ChEBI" id="CHEBI:30616"/>
        <dbReference type="ChEBI" id="CHEBI:43474"/>
        <dbReference type="ChEBI" id="CHEBI:57783"/>
        <dbReference type="ChEBI" id="CHEBI:64076"/>
        <dbReference type="ChEBI" id="CHEBI:456216"/>
        <dbReference type="EC" id="4.2.1.93"/>
    </reaction>
</comment>
<comment type="cofactor">
    <cofactor evidence="1">
        <name>Mg(2+)</name>
        <dbReference type="ChEBI" id="CHEBI:18420"/>
    </cofactor>
</comment>
<comment type="subcellular location">
    <subcellularLocation>
        <location evidence="1">Cytoplasm</location>
    </subcellularLocation>
</comment>
<comment type="similarity">
    <text evidence="1">Belongs to the NnrD/CARKD family.</text>
</comment>
<sequence length="377" mass="42016">MLRNKSQKELLHLSRQLIQPLLPNFHKGQAGKIVVIGGNEDYTGAPFFASHSAALVGADLSHVICEKAAGPVIKSYSPDLMIHPYLMDLDNPHLNLNNSELEKLKNLPIDEIIKTNDNAVLNKLIDELILPKVTSLLNRIDIVVVGPGFGRDPLMLKSLIRIIEEVKVLNLPIILDADSLYLVSLSPKIIANYPKAIITPNVVEFQRIAKALSIDADLSESNKDKLIDQTIEVSRKLGDIIVFRKGEHDLIVKSSKFLINEITGSNKRVGGQGDTLTGAIATLVNWSNNYILRLWDNQVVVNWSNNYILRLWDNQVDLDQEDANLLACFAASSVVRNASSKAFNKYGRSMQTSNVHEYLHESFTELFGDSIFRTSNI</sequence>
<feature type="chain" id="PRO_0000416180" description="ATP-dependent (S)-NAD(P)H-hydrate dehydratase">
    <location>
        <begin position="1"/>
        <end position="377"/>
    </location>
</feature>
<feature type="domain" description="YjeF C-terminal" evidence="1">
    <location>
        <begin position="10"/>
        <end position="366"/>
    </location>
</feature>
<feature type="binding site" evidence="1">
    <location>
        <position position="148"/>
    </location>
    <ligand>
        <name>(6S)-NADPHX</name>
        <dbReference type="ChEBI" id="CHEBI:64076"/>
    </ligand>
</feature>
<feature type="binding site" evidence="1">
    <location>
        <begin position="201"/>
        <end position="207"/>
    </location>
    <ligand>
        <name>(6S)-NADPHX</name>
        <dbReference type="ChEBI" id="CHEBI:64076"/>
    </ligand>
</feature>
<feature type="binding site" evidence="1">
    <location>
        <begin position="245"/>
        <end position="249"/>
    </location>
    <ligand>
        <name>ATP</name>
        <dbReference type="ChEBI" id="CHEBI:30616"/>
    </ligand>
</feature>
<feature type="binding site" evidence="1">
    <location>
        <begin position="264"/>
        <end position="273"/>
    </location>
    <ligand>
        <name>ATP</name>
        <dbReference type="ChEBI" id="CHEBI:30616"/>
    </ligand>
</feature>
<feature type="binding site" evidence="1">
    <location>
        <position position="274"/>
    </location>
    <ligand>
        <name>(6S)-NADPHX</name>
        <dbReference type="ChEBI" id="CHEBI:64076"/>
    </ligand>
</feature>